<reference key="1">
    <citation type="submission" date="2007-09" db="EMBL/GenBank/DDBJ databases">
        <title>Complete genome sequence of Rickettsia canadensis.</title>
        <authorList>
            <person name="Madan A."/>
            <person name="Fahey J."/>
            <person name="Helton E."/>
            <person name="Ketteman M."/>
            <person name="Madan A."/>
            <person name="Rodrigues S."/>
            <person name="Sanchez A."/>
            <person name="Whiting M."/>
            <person name="Dasch G."/>
            <person name="Eremeeva M."/>
        </authorList>
    </citation>
    <scope>NUCLEOTIDE SEQUENCE [LARGE SCALE GENOMIC DNA]</scope>
    <source>
        <strain>McKiel</strain>
    </source>
</reference>
<name>PNP_RICCK</name>
<comment type="function">
    <text evidence="1">Involved in mRNA degradation. Catalyzes the phosphorolysis of single-stranded polyribonucleotides processively in the 3'- to 5'-direction.</text>
</comment>
<comment type="catalytic activity">
    <reaction evidence="1">
        <text>RNA(n+1) + phosphate = RNA(n) + a ribonucleoside 5'-diphosphate</text>
        <dbReference type="Rhea" id="RHEA:22096"/>
        <dbReference type="Rhea" id="RHEA-COMP:14527"/>
        <dbReference type="Rhea" id="RHEA-COMP:17342"/>
        <dbReference type="ChEBI" id="CHEBI:43474"/>
        <dbReference type="ChEBI" id="CHEBI:57930"/>
        <dbReference type="ChEBI" id="CHEBI:140395"/>
        <dbReference type="EC" id="2.7.7.8"/>
    </reaction>
</comment>
<comment type="cofactor">
    <cofactor evidence="1">
        <name>Mg(2+)</name>
        <dbReference type="ChEBI" id="CHEBI:18420"/>
    </cofactor>
</comment>
<comment type="subcellular location">
    <subcellularLocation>
        <location evidence="1">Cytoplasm</location>
    </subcellularLocation>
</comment>
<comment type="similarity">
    <text evidence="1">Belongs to the polyribonucleotide nucleotidyltransferase family.</text>
</comment>
<protein>
    <recommendedName>
        <fullName evidence="1">Polyribonucleotide nucleotidyltransferase</fullName>
        <ecNumber evidence="1">2.7.7.8</ecNumber>
    </recommendedName>
    <alternativeName>
        <fullName evidence="1">Polynucleotide phosphorylase</fullName>
        <shortName evidence="1">PNPase</shortName>
    </alternativeName>
</protein>
<organism>
    <name type="scientific">Rickettsia canadensis (strain McKiel)</name>
    <dbReference type="NCBI Taxonomy" id="293613"/>
    <lineage>
        <taxon>Bacteria</taxon>
        <taxon>Pseudomonadati</taxon>
        <taxon>Pseudomonadota</taxon>
        <taxon>Alphaproteobacteria</taxon>
        <taxon>Rickettsiales</taxon>
        <taxon>Rickettsiaceae</taxon>
        <taxon>Rickettsieae</taxon>
        <taxon>Rickettsia</taxon>
        <taxon>belli group</taxon>
    </lineage>
</organism>
<accession>A8EYU2</accession>
<evidence type="ECO:0000255" key="1">
    <source>
        <dbReference type="HAMAP-Rule" id="MF_01595"/>
    </source>
</evidence>
<evidence type="ECO:0000256" key="2">
    <source>
        <dbReference type="SAM" id="MobiDB-lite"/>
    </source>
</evidence>
<dbReference type="EC" id="2.7.7.8" evidence="1"/>
<dbReference type="EMBL" id="CP000409">
    <property type="protein sequence ID" value="ABV73525.1"/>
    <property type="molecule type" value="Genomic_DNA"/>
</dbReference>
<dbReference type="RefSeq" id="WP_012148722.1">
    <property type="nucleotide sequence ID" value="NC_009879.1"/>
</dbReference>
<dbReference type="SMR" id="A8EYU2"/>
<dbReference type="STRING" id="293613.A1E_02925"/>
<dbReference type="KEGG" id="rcm:A1E_02925"/>
<dbReference type="eggNOG" id="COG1185">
    <property type="taxonomic scope" value="Bacteria"/>
</dbReference>
<dbReference type="HOGENOM" id="CLU_004217_2_2_5"/>
<dbReference type="Proteomes" id="UP000007056">
    <property type="component" value="Chromosome"/>
</dbReference>
<dbReference type="GO" id="GO:0005829">
    <property type="term" value="C:cytosol"/>
    <property type="evidence" value="ECO:0007669"/>
    <property type="project" value="TreeGrafter"/>
</dbReference>
<dbReference type="GO" id="GO:0000175">
    <property type="term" value="F:3'-5'-RNA exonuclease activity"/>
    <property type="evidence" value="ECO:0007669"/>
    <property type="project" value="TreeGrafter"/>
</dbReference>
<dbReference type="GO" id="GO:0000287">
    <property type="term" value="F:magnesium ion binding"/>
    <property type="evidence" value="ECO:0007669"/>
    <property type="project" value="UniProtKB-UniRule"/>
</dbReference>
<dbReference type="GO" id="GO:0004654">
    <property type="term" value="F:polyribonucleotide nucleotidyltransferase activity"/>
    <property type="evidence" value="ECO:0007669"/>
    <property type="project" value="UniProtKB-UniRule"/>
</dbReference>
<dbReference type="GO" id="GO:0003723">
    <property type="term" value="F:RNA binding"/>
    <property type="evidence" value="ECO:0007669"/>
    <property type="project" value="UniProtKB-UniRule"/>
</dbReference>
<dbReference type="GO" id="GO:0006402">
    <property type="term" value="P:mRNA catabolic process"/>
    <property type="evidence" value="ECO:0007669"/>
    <property type="project" value="UniProtKB-UniRule"/>
</dbReference>
<dbReference type="GO" id="GO:0006396">
    <property type="term" value="P:RNA processing"/>
    <property type="evidence" value="ECO:0007669"/>
    <property type="project" value="InterPro"/>
</dbReference>
<dbReference type="CDD" id="cd02393">
    <property type="entry name" value="KH-I_PNPase"/>
    <property type="match status" value="1"/>
</dbReference>
<dbReference type="CDD" id="cd11364">
    <property type="entry name" value="RNase_PH_PNPase_2"/>
    <property type="match status" value="1"/>
</dbReference>
<dbReference type="FunFam" id="3.30.1370.10:FF:000001">
    <property type="entry name" value="Polyribonucleotide nucleotidyltransferase"/>
    <property type="match status" value="1"/>
</dbReference>
<dbReference type="FunFam" id="3.30.230.70:FF:000001">
    <property type="entry name" value="Polyribonucleotide nucleotidyltransferase"/>
    <property type="match status" value="1"/>
</dbReference>
<dbReference type="FunFam" id="3.30.230.70:FF:000002">
    <property type="entry name" value="Polyribonucleotide nucleotidyltransferase"/>
    <property type="match status" value="1"/>
</dbReference>
<dbReference type="FunFam" id="2.40.50.140:FF:000189">
    <property type="entry name" value="Polyribonucleotide nucleotidyltransferase, putative"/>
    <property type="match status" value="1"/>
</dbReference>
<dbReference type="Gene3D" id="3.30.230.70">
    <property type="entry name" value="GHMP Kinase, N-terminal domain"/>
    <property type="match status" value="2"/>
</dbReference>
<dbReference type="Gene3D" id="3.30.1370.10">
    <property type="entry name" value="K Homology domain, type 1"/>
    <property type="match status" value="1"/>
</dbReference>
<dbReference type="Gene3D" id="2.40.50.140">
    <property type="entry name" value="Nucleic acid-binding proteins"/>
    <property type="match status" value="1"/>
</dbReference>
<dbReference type="HAMAP" id="MF_01595">
    <property type="entry name" value="PNPase"/>
    <property type="match status" value="1"/>
</dbReference>
<dbReference type="InterPro" id="IPR001247">
    <property type="entry name" value="ExoRNase_PH_dom1"/>
</dbReference>
<dbReference type="InterPro" id="IPR015847">
    <property type="entry name" value="ExoRNase_PH_dom2"/>
</dbReference>
<dbReference type="InterPro" id="IPR036345">
    <property type="entry name" value="ExoRNase_PH_dom2_sf"/>
</dbReference>
<dbReference type="InterPro" id="IPR004087">
    <property type="entry name" value="KH_dom"/>
</dbReference>
<dbReference type="InterPro" id="IPR004088">
    <property type="entry name" value="KH_dom_type_1"/>
</dbReference>
<dbReference type="InterPro" id="IPR036612">
    <property type="entry name" value="KH_dom_type_1_sf"/>
</dbReference>
<dbReference type="InterPro" id="IPR012340">
    <property type="entry name" value="NA-bd_OB-fold"/>
</dbReference>
<dbReference type="InterPro" id="IPR012162">
    <property type="entry name" value="PNPase"/>
</dbReference>
<dbReference type="InterPro" id="IPR027408">
    <property type="entry name" value="PNPase/RNase_PH_dom_sf"/>
</dbReference>
<dbReference type="InterPro" id="IPR015848">
    <property type="entry name" value="PNPase_PH_RNA-bd_bac/org-type"/>
</dbReference>
<dbReference type="InterPro" id="IPR036456">
    <property type="entry name" value="PNPase_PH_RNA-bd_sf"/>
</dbReference>
<dbReference type="InterPro" id="IPR020568">
    <property type="entry name" value="Ribosomal_Su5_D2-typ_SF"/>
</dbReference>
<dbReference type="InterPro" id="IPR003029">
    <property type="entry name" value="S1_domain"/>
</dbReference>
<dbReference type="NCBIfam" id="TIGR03591">
    <property type="entry name" value="polynuc_phos"/>
    <property type="match status" value="1"/>
</dbReference>
<dbReference type="NCBIfam" id="NF008805">
    <property type="entry name" value="PRK11824.1"/>
    <property type="match status" value="1"/>
</dbReference>
<dbReference type="PANTHER" id="PTHR11252">
    <property type="entry name" value="POLYRIBONUCLEOTIDE NUCLEOTIDYLTRANSFERASE"/>
    <property type="match status" value="1"/>
</dbReference>
<dbReference type="PANTHER" id="PTHR11252:SF0">
    <property type="entry name" value="POLYRIBONUCLEOTIDE NUCLEOTIDYLTRANSFERASE 1, MITOCHONDRIAL"/>
    <property type="match status" value="1"/>
</dbReference>
<dbReference type="Pfam" id="PF00013">
    <property type="entry name" value="KH_1"/>
    <property type="match status" value="1"/>
</dbReference>
<dbReference type="Pfam" id="PF03726">
    <property type="entry name" value="PNPase"/>
    <property type="match status" value="1"/>
</dbReference>
<dbReference type="Pfam" id="PF01138">
    <property type="entry name" value="RNase_PH"/>
    <property type="match status" value="2"/>
</dbReference>
<dbReference type="Pfam" id="PF03725">
    <property type="entry name" value="RNase_PH_C"/>
    <property type="match status" value="1"/>
</dbReference>
<dbReference type="Pfam" id="PF00575">
    <property type="entry name" value="S1"/>
    <property type="match status" value="1"/>
</dbReference>
<dbReference type="PIRSF" id="PIRSF005499">
    <property type="entry name" value="PNPase"/>
    <property type="match status" value="1"/>
</dbReference>
<dbReference type="SMART" id="SM00322">
    <property type="entry name" value="KH"/>
    <property type="match status" value="1"/>
</dbReference>
<dbReference type="SMART" id="SM00316">
    <property type="entry name" value="S1"/>
    <property type="match status" value="1"/>
</dbReference>
<dbReference type="SUPFAM" id="SSF54791">
    <property type="entry name" value="Eukaryotic type KH-domain (KH-domain type I)"/>
    <property type="match status" value="1"/>
</dbReference>
<dbReference type="SUPFAM" id="SSF50249">
    <property type="entry name" value="Nucleic acid-binding proteins"/>
    <property type="match status" value="1"/>
</dbReference>
<dbReference type="SUPFAM" id="SSF46915">
    <property type="entry name" value="Polynucleotide phosphorylase/guanosine pentaphosphate synthase (PNPase/GPSI), domain 3"/>
    <property type="match status" value="1"/>
</dbReference>
<dbReference type="SUPFAM" id="SSF55666">
    <property type="entry name" value="Ribonuclease PH domain 2-like"/>
    <property type="match status" value="2"/>
</dbReference>
<dbReference type="SUPFAM" id="SSF54211">
    <property type="entry name" value="Ribosomal protein S5 domain 2-like"/>
    <property type="match status" value="2"/>
</dbReference>
<dbReference type="PROSITE" id="PS50084">
    <property type="entry name" value="KH_TYPE_1"/>
    <property type="match status" value="1"/>
</dbReference>
<dbReference type="PROSITE" id="PS50126">
    <property type="entry name" value="S1"/>
    <property type="match status" value="1"/>
</dbReference>
<gene>
    <name evidence="1" type="primary">pnp</name>
    <name type="ordered locus">A1E_02925</name>
</gene>
<keyword id="KW-0963">Cytoplasm</keyword>
<keyword id="KW-0460">Magnesium</keyword>
<keyword id="KW-0479">Metal-binding</keyword>
<keyword id="KW-0548">Nucleotidyltransferase</keyword>
<keyword id="KW-0694">RNA-binding</keyword>
<keyword id="KW-0808">Transferase</keyword>
<feature type="chain" id="PRO_0000329817" description="Polyribonucleotide nucleotidyltransferase">
    <location>
        <begin position="1"/>
        <end position="747"/>
    </location>
</feature>
<feature type="domain" description="KH" evidence="1">
    <location>
        <begin position="554"/>
        <end position="613"/>
    </location>
</feature>
<feature type="domain" description="S1 motif" evidence="1">
    <location>
        <begin position="623"/>
        <end position="691"/>
    </location>
</feature>
<feature type="region of interest" description="Disordered" evidence="2">
    <location>
        <begin position="694"/>
        <end position="716"/>
    </location>
</feature>
<feature type="compositionally biased region" description="Polar residues" evidence="2">
    <location>
        <begin position="699"/>
        <end position="712"/>
    </location>
</feature>
<feature type="binding site" evidence="1">
    <location>
        <position position="487"/>
    </location>
    <ligand>
        <name>Mg(2+)</name>
        <dbReference type="ChEBI" id="CHEBI:18420"/>
    </ligand>
</feature>
<feature type="binding site" evidence="1">
    <location>
        <position position="493"/>
    </location>
    <ligand>
        <name>Mg(2+)</name>
        <dbReference type="ChEBI" id="CHEBI:18420"/>
    </ligand>
</feature>
<proteinExistence type="inferred from homology"/>
<sequence length="747" mass="82109">MFNEITKSVTWNGKVLELSTGKIARQADGSVTVKMGNSVLLCTAVVANTAKEGIGFFPLTINYREMAYAVGKIPGGFFKREGKASEREVLVSRLIDRPIRPLFHPAFVNETHVTCTVLSYDPETPVDILAIIGASAALALSPAPYLEIVAASKVGLINGEFVLNPTLELLKTSQLDLVVAGTTESVMMVESEAHLLSEAQMLEAVKFGFESFQPVVKIIKELAEEAKRPKLEMQDLYPSVLKNEIEQLFAKEIEQAFAIKSKQERSTSLDLISEKVITHFISNIENKKYNNYQIESALKSVESDILRKEILEKNKRIDGRSTMDIRQIACEVGLLPSAHGSALFTRGETQSLVSSTLGTSLDEQIVDNLEGEYKERFMLNYIFPPYSVNEAMPMKAPSRREVGHGKLAWRAINPILPNKVQFPYSIRVVAETTESNGSSSMATVCGSSLALMQTGIPIKAPVAGIAMGLVKEGKKFAVLSDILGDEDYFGDMDFKVAGTSEGITALQMDIKISGVDFKIMKVALEQARLGRLHILEQMNKVISKPNSELSKNAPSTTTIKIDKDKIRDIIGPGGKIIKEICETSGAKIDISDDGTVSVYAADRDKLKIASDKIKAIAIEPEIGEIFNGTVTKILDSGAFINYLGNKDGFVHISEISEERIDTVSSVIKQGDIVKVKLIGFDNKGKAKLTIKNADKDKSLNNPKPQNSINNAKENSEHVRCDSIKKRAWNEDNNAETAEFITERKYFN</sequence>